<proteinExistence type="inferred from homology"/>
<comment type="function">
    <text evidence="1">Catalyzes the circularization of gamma-N-acetyl-alpha,gamma-diaminobutyric acid (ADABA) to ectoine (1,4,5,6-tetrahydro-2-methyl-4-pyrimidine carboxylic acid), which is an excellent osmoprotectant.</text>
</comment>
<comment type="catalytic activity">
    <reaction evidence="1">
        <text>(2S)-4-acetamido-2-aminobutanoate = L-ectoine + H2O</text>
        <dbReference type="Rhea" id="RHEA:17281"/>
        <dbReference type="ChEBI" id="CHEBI:15377"/>
        <dbReference type="ChEBI" id="CHEBI:58515"/>
        <dbReference type="ChEBI" id="CHEBI:58929"/>
        <dbReference type="EC" id="4.2.1.108"/>
    </reaction>
</comment>
<comment type="pathway">
    <text evidence="1">Amine and polyamine biosynthesis; ectoine biosynthesis; L-ectoine from L-aspartate 4-semialdehyde: step 3/3.</text>
</comment>
<comment type="similarity">
    <text evidence="1">Belongs to the ectoine synthase family.</text>
</comment>
<feature type="chain" id="PRO_1000085807" description="L-ectoine synthase">
    <location>
        <begin position="1"/>
        <end position="130"/>
    </location>
</feature>
<evidence type="ECO:0000255" key="1">
    <source>
        <dbReference type="HAMAP-Rule" id="MF_01255"/>
    </source>
</evidence>
<organism>
    <name type="scientific">Mycolicibacterium gilvum (strain PYR-GCK)</name>
    <name type="common">Mycobacterium gilvum (strain PYR-GCK)</name>
    <dbReference type="NCBI Taxonomy" id="350054"/>
    <lineage>
        <taxon>Bacteria</taxon>
        <taxon>Bacillati</taxon>
        <taxon>Actinomycetota</taxon>
        <taxon>Actinomycetes</taxon>
        <taxon>Mycobacteriales</taxon>
        <taxon>Mycobacteriaceae</taxon>
        <taxon>Mycolicibacterium</taxon>
    </lineage>
</organism>
<dbReference type="EC" id="4.2.1.108" evidence="1"/>
<dbReference type="EMBL" id="CP000656">
    <property type="protein sequence ID" value="ABP47302.1"/>
    <property type="molecule type" value="Genomic_DNA"/>
</dbReference>
<dbReference type="SMR" id="A4TEW9"/>
<dbReference type="STRING" id="350054.Mflv_4834"/>
<dbReference type="KEGG" id="mgi:Mflv_4834"/>
<dbReference type="eggNOG" id="COG1917">
    <property type="taxonomic scope" value="Bacteria"/>
</dbReference>
<dbReference type="HOGENOM" id="CLU_154525_0_0_11"/>
<dbReference type="OrthoDB" id="4406415at2"/>
<dbReference type="UniPathway" id="UPA00067">
    <property type="reaction ID" value="UER00123"/>
</dbReference>
<dbReference type="GO" id="GO:0033990">
    <property type="term" value="F:ectoine synthase activity"/>
    <property type="evidence" value="ECO:0007669"/>
    <property type="project" value="UniProtKB-EC"/>
</dbReference>
<dbReference type="GO" id="GO:0019491">
    <property type="term" value="P:ectoine biosynthetic process"/>
    <property type="evidence" value="ECO:0007669"/>
    <property type="project" value="UniProtKB-UniRule"/>
</dbReference>
<dbReference type="CDD" id="cd06978">
    <property type="entry name" value="cupin_EctC"/>
    <property type="match status" value="1"/>
</dbReference>
<dbReference type="Gene3D" id="2.60.120.10">
    <property type="entry name" value="Jelly Rolls"/>
    <property type="match status" value="1"/>
</dbReference>
<dbReference type="HAMAP" id="MF_01255">
    <property type="entry name" value="Ectoine_synth"/>
    <property type="match status" value="1"/>
</dbReference>
<dbReference type="InterPro" id="IPR010462">
    <property type="entry name" value="Ectoine_synth"/>
</dbReference>
<dbReference type="InterPro" id="IPR014710">
    <property type="entry name" value="RmlC-like_jellyroll"/>
</dbReference>
<dbReference type="InterPro" id="IPR011051">
    <property type="entry name" value="RmlC_Cupin_sf"/>
</dbReference>
<dbReference type="NCBIfam" id="NF009806">
    <property type="entry name" value="PRK13290.1"/>
    <property type="match status" value="1"/>
</dbReference>
<dbReference type="PANTHER" id="PTHR39289">
    <property type="match status" value="1"/>
</dbReference>
<dbReference type="PANTHER" id="PTHR39289:SF1">
    <property type="entry name" value="L-ECTOINE SYNTHASE"/>
    <property type="match status" value="1"/>
</dbReference>
<dbReference type="Pfam" id="PF06339">
    <property type="entry name" value="Ectoine_synth"/>
    <property type="match status" value="1"/>
</dbReference>
<dbReference type="SUPFAM" id="SSF51182">
    <property type="entry name" value="RmlC-like cupins"/>
    <property type="match status" value="1"/>
</dbReference>
<sequence>MIVRTTDEITGTHRDVAAANWRSKRIVLADDAVGFSFHETTIDADSVSEFHYRHHVEAVWIVEGTGTLTNHETGEEHPLRPGTMYLLNGHERHRVTCDTTMRMLCVFNPPVTGQEIHDETGAYPPAVQAS</sequence>
<keyword id="KW-0456">Lyase</keyword>
<protein>
    <recommendedName>
        <fullName evidence="1">L-ectoine synthase</fullName>
        <ecNumber evidence="1">4.2.1.108</ecNumber>
    </recommendedName>
    <alternativeName>
        <fullName evidence="1">N-acetyldiaminobutyrate dehydratase</fullName>
    </alternativeName>
</protein>
<gene>
    <name evidence="1" type="primary">ectC</name>
    <name type="ordered locus">Mflv_4834</name>
</gene>
<accession>A4TEW9</accession>
<name>ECTC_MYCGI</name>
<reference key="1">
    <citation type="submission" date="2007-04" db="EMBL/GenBank/DDBJ databases">
        <title>Complete sequence of chromosome of Mycobacterium gilvum PYR-GCK.</title>
        <authorList>
            <consortium name="US DOE Joint Genome Institute"/>
            <person name="Copeland A."/>
            <person name="Lucas S."/>
            <person name="Lapidus A."/>
            <person name="Barry K."/>
            <person name="Detter J.C."/>
            <person name="Glavina del Rio T."/>
            <person name="Hammon N."/>
            <person name="Israni S."/>
            <person name="Dalin E."/>
            <person name="Tice H."/>
            <person name="Pitluck S."/>
            <person name="Chain P."/>
            <person name="Malfatti S."/>
            <person name="Shin M."/>
            <person name="Vergez L."/>
            <person name="Schmutz J."/>
            <person name="Larimer F."/>
            <person name="Land M."/>
            <person name="Hauser L."/>
            <person name="Kyrpides N."/>
            <person name="Mikhailova N."/>
            <person name="Miller C."/>
            <person name="Richardson P."/>
        </authorList>
    </citation>
    <scope>NUCLEOTIDE SEQUENCE [LARGE SCALE GENOMIC DNA]</scope>
    <source>
        <strain>PYR-GCK</strain>
    </source>
</reference>